<protein>
    <recommendedName>
        <fullName evidence="1">Valine--tRNA ligase</fullName>
        <ecNumber evidence="1">6.1.1.9</ecNumber>
    </recommendedName>
    <alternativeName>
        <fullName evidence="1">Valyl-tRNA synthetase</fullName>
        <shortName evidence="1">ValRS</shortName>
    </alternativeName>
</protein>
<evidence type="ECO:0000255" key="1">
    <source>
        <dbReference type="HAMAP-Rule" id="MF_02004"/>
    </source>
</evidence>
<sequence length="1165" mass="137151">MEIKEYNPREIEEKWSRYWIEKALYHVEKPDKRKKFSVVIPPPNVTGSLHMGHALNATLQDVIVRWQRMRGRECVWVPGFDHAGIATQYVVEKQLAKEGKSRLELGREEFLKKVWEWVPKSRNAIRTQLTKLGVSVDWKRERFTLDEGFSRAVRKAFRTLFEEGLIYRAEYIVNWCPNDRTALSDLEVEYEEEKGSLWYIKYPIVDENGKDTGEFITVATTRPETMLGDTAVAVNPNDDRYKHLVGKRARLPLVNWERKDLRGNSVSNLIPIIADERVKMDFGTGAVKITPAHDPLDFEIGKTHDLPFVRVIDETGRMNENAGDFAGMDRYEAREAIVAKLREDELLEKEEEITHSVGHCYRCKTVIEPMVSVQWFVKVSDPRIKDISIKVVEEGIKEREEKELFVQLAQVEELSVVIPLKEEGRHKIVVVLDKTAKFLVGKREGELAYIYYPKGDERTLEFAKRLAEEFKDYEFMVAYEGLPKIVVMGNEQLVEPGSYLFVYDGKKLDLYKLEGEKPKFLKTLGKGEADLEVTQKSIQIKPERIKKVEEREKRVKFIPEHWKKFYLDWMYNLKDWCISRQIWWGHRIPVWYCKDCGNVNVFTDDDFDRAHDKIIFNLIADGKIDQEFTPEEVEKVLKSPHFVHPEMTVLDFYKKFVFHRYYNMDITADSLRLLFTQDMNPMAMLTPGVSTRNIYKYDSQKKKWKMVLRCKKCGSENLEQERDVLDTWFSSALWPFGVFGWPESTEDLKNLYPTDLLVTGFDIIFFWVARMIMMGTHFMKDIPFYDVYVHALVRDKYGRKMSKTIGNVIDPLDIIERYGADALRFTLAILTVQGRDIKLAEEKFEGYKHFANKIWNAARYVLMNTPEDFIARIPYMAPLKPEDKWIITKLNETAEEVNKALENYQYSQAAHAIYEFFWSDYCDWYIEFTKERIYKKAPEDNEEEKAKVENERTTALYTLHYVLEKALRILHPFMPYITEELWHKLPNAEGESISLAEFPQKNEDEIYEEDKQKVERLKEIISAIRAIRSDLQIKPSEKIKASFKTESEFSRRVIQEFKNHILNLAKLESFEEVSQRPQNTVATFSKDTEIYVHIEGHVDLDKLIQSYEKKREKLLKELERVNKKLSNENFLKKAPVEVVEKEKQIKEELENDLKKVEEILKVLRS</sequence>
<accession>O67411</accession>
<comment type="function">
    <text evidence="1">Catalyzes the attachment of valine to tRNA(Val). As ValRS can inadvertently accommodate and process structurally similar amino acids such as threonine, to avoid such errors, it has a 'posttransfer' editing activity that hydrolyzes mischarged Thr-tRNA(Val) in a tRNA-dependent manner.</text>
</comment>
<comment type="catalytic activity">
    <reaction evidence="1">
        <text>tRNA(Val) + L-valine + ATP = L-valyl-tRNA(Val) + AMP + diphosphate</text>
        <dbReference type="Rhea" id="RHEA:10704"/>
        <dbReference type="Rhea" id="RHEA-COMP:9672"/>
        <dbReference type="Rhea" id="RHEA-COMP:9708"/>
        <dbReference type="ChEBI" id="CHEBI:30616"/>
        <dbReference type="ChEBI" id="CHEBI:33019"/>
        <dbReference type="ChEBI" id="CHEBI:57762"/>
        <dbReference type="ChEBI" id="CHEBI:78442"/>
        <dbReference type="ChEBI" id="CHEBI:78537"/>
        <dbReference type="ChEBI" id="CHEBI:456215"/>
        <dbReference type="EC" id="6.1.1.9"/>
    </reaction>
</comment>
<comment type="subunit">
    <text evidence="1">Monomer.</text>
</comment>
<comment type="subcellular location">
    <subcellularLocation>
        <location evidence="1">Cytoplasm</location>
    </subcellularLocation>
</comment>
<comment type="domain">
    <text evidence="1">ValRS has two distinct active sites: one for aminoacylation and one for editing. The misactivated threonine is translocated from the active site to the editing site.</text>
</comment>
<comment type="domain">
    <text evidence="1">The C-terminal coiled-coil domain is crucial for aminoacylation activity.</text>
</comment>
<comment type="similarity">
    <text evidence="1">Belongs to the class-I aminoacyl-tRNA synthetase family. ValS type 1 subfamily.</text>
</comment>
<name>SYV_AQUAE</name>
<reference key="1">
    <citation type="journal article" date="1998" name="Nature">
        <title>The complete genome of the hyperthermophilic bacterium Aquifex aeolicus.</title>
        <authorList>
            <person name="Deckert G."/>
            <person name="Warren P.V."/>
            <person name="Gaasterland T."/>
            <person name="Young W.G."/>
            <person name="Lenox A.L."/>
            <person name="Graham D.E."/>
            <person name="Overbeek R."/>
            <person name="Snead M.A."/>
            <person name="Keller M."/>
            <person name="Aujay M."/>
            <person name="Huber R."/>
            <person name="Feldman R.A."/>
            <person name="Short J.M."/>
            <person name="Olsen G.J."/>
            <person name="Swanson R.V."/>
        </authorList>
    </citation>
    <scope>NUCLEOTIDE SEQUENCE [LARGE SCALE GENOMIC DNA]</scope>
    <source>
        <strain>VF5</strain>
    </source>
</reference>
<proteinExistence type="inferred from homology"/>
<keyword id="KW-0030">Aminoacyl-tRNA synthetase</keyword>
<keyword id="KW-0067">ATP-binding</keyword>
<keyword id="KW-0175">Coiled coil</keyword>
<keyword id="KW-0963">Cytoplasm</keyword>
<keyword id="KW-0436">Ligase</keyword>
<keyword id="KW-0547">Nucleotide-binding</keyword>
<keyword id="KW-0648">Protein biosynthesis</keyword>
<keyword id="KW-1185">Reference proteome</keyword>
<dbReference type="EC" id="6.1.1.9" evidence="1"/>
<dbReference type="EMBL" id="AE000657">
    <property type="protein sequence ID" value="AAC07375.1"/>
    <property type="molecule type" value="Genomic_DNA"/>
</dbReference>
<dbReference type="PIR" id="A70423">
    <property type="entry name" value="A70423"/>
</dbReference>
<dbReference type="RefSeq" id="NP_213976.1">
    <property type="nucleotide sequence ID" value="NC_000918.1"/>
</dbReference>
<dbReference type="RefSeq" id="WP_010880914.1">
    <property type="nucleotide sequence ID" value="NC_000918.1"/>
</dbReference>
<dbReference type="SMR" id="O67411"/>
<dbReference type="FunCoup" id="O67411">
    <property type="interactions" value="439"/>
</dbReference>
<dbReference type="STRING" id="224324.aq_1413"/>
<dbReference type="EnsemblBacteria" id="AAC07375">
    <property type="protein sequence ID" value="AAC07375"/>
    <property type="gene ID" value="aq_1413"/>
</dbReference>
<dbReference type="KEGG" id="aae:aq_1413"/>
<dbReference type="PATRIC" id="fig|224324.8.peg.1107"/>
<dbReference type="eggNOG" id="COG0525">
    <property type="taxonomic scope" value="Bacteria"/>
</dbReference>
<dbReference type="HOGENOM" id="CLU_001493_0_1_0"/>
<dbReference type="InParanoid" id="O67411"/>
<dbReference type="OrthoDB" id="9810365at2"/>
<dbReference type="Proteomes" id="UP000000798">
    <property type="component" value="Chromosome"/>
</dbReference>
<dbReference type="GO" id="GO:0005829">
    <property type="term" value="C:cytosol"/>
    <property type="evidence" value="ECO:0000318"/>
    <property type="project" value="GO_Central"/>
</dbReference>
<dbReference type="GO" id="GO:0002161">
    <property type="term" value="F:aminoacyl-tRNA deacylase activity"/>
    <property type="evidence" value="ECO:0007669"/>
    <property type="project" value="InterPro"/>
</dbReference>
<dbReference type="GO" id="GO:0005524">
    <property type="term" value="F:ATP binding"/>
    <property type="evidence" value="ECO:0007669"/>
    <property type="project" value="UniProtKB-UniRule"/>
</dbReference>
<dbReference type="GO" id="GO:0004832">
    <property type="term" value="F:valine-tRNA ligase activity"/>
    <property type="evidence" value="ECO:0000318"/>
    <property type="project" value="GO_Central"/>
</dbReference>
<dbReference type="GO" id="GO:0006438">
    <property type="term" value="P:valyl-tRNA aminoacylation"/>
    <property type="evidence" value="ECO:0000318"/>
    <property type="project" value="GO_Central"/>
</dbReference>
<dbReference type="CDD" id="cd07962">
    <property type="entry name" value="Anticodon_Ia_Val"/>
    <property type="match status" value="1"/>
</dbReference>
<dbReference type="CDD" id="cd00817">
    <property type="entry name" value="ValRS_core"/>
    <property type="match status" value="1"/>
</dbReference>
<dbReference type="FunFam" id="1.10.287.380:FF:000001">
    <property type="entry name" value="Valine--tRNA ligase"/>
    <property type="match status" value="1"/>
</dbReference>
<dbReference type="FunFam" id="1.10.730.10:FF:000014">
    <property type="entry name" value="Valine--tRNA ligase"/>
    <property type="match status" value="1"/>
</dbReference>
<dbReference type="FunFam" id="3.40.50.620:FF:000032">
    <property type="entry name" value="Valine--tRNA ligase"/>
    <property type="match status" value="1"/>
</dbReference>
<dbReference type="FunFam" id="3.90.740.10:FF:000055">
    <property type="entry name" value="Valyl Amino-acyl tRNA Synthetase"/>
    <property type="match status" value="1"/>
</dbReference>
<dbReference type="Gene3D" id="3.40.50.620">
    <property type="entry name" value="HUPs"/>
    <property type="match status" value="3"/>
</dbReference>
<dbReference type="Gene3D" id="1.10.730.10">
    <property type="entry name" value="Isoleucyl-tRNA Synthetase, Domain 1"/>
    <property type="match status" value="1"/>
</dbReference>
<dbReference type="Gene3D" id="1.10.287.380">
    <property type="entry name" value="Valyl-tRNA synthetase, C-terminal domain"/>
    <property type="match status" value="1"/>
</dbReference>
<dbReference type="Gene3D" id="3.90.740.10">
    <property type="entry name" value="Valyl/Leucyl/Isoleucyl-tRNA synthetase, editing domain"/>
    <property type="match status" value="2"/>
</dbReference>
<dbReference type="HAMAP" id="MF_02004">
    <property type="entry name" value="Val_tRNA_synth_type1"/>
    <property type="match status" value="1"/>
</dbReference>
<dbReference type="InterPro" id="IPR001412">
    <property type="entry name" value="aa-tRNA-synth_I_CS"/>
</dbReference>
<dbReference type="InterPro" id="IPR002300">
    <property type="entry name" value="aa-tRNA-synth_Ia"/>
</dbReference>
<dbReference type="InterPro" id="IPR033705">
    <property type="entry name" value="Anticodon_Ia_Val"/>
</dbReference>
<dbReference type="InterPro" id="IPR013155">
    <property type="entry name" value="M/V/L/I-tRNA-synth_anticd-bd"/>
</dbReference>
<dbReference type="InterPro" id="IPR014729">
    <property type="entry name" value="Rossmann-like_a/b/a_fold"/>
</dbReference>
<dbReference type="InterPro" id="IPR010978">
    <property type="entry name" value="tRNA-bd_arm"/>
</dbReference>
<dbReference type="InterPro" id="IPR009080">
    <property type="entry name" value="tRNAsynth_Ia_anticodon-bd"/>
</dbReference>
<dbReference type="InterPro" id="IPR037118">
    <property type="entry name" value="Val-tRNA_synth_C_sf"/>
</dbReference>
<dbReference type="InterPro" id="IPR019499">
    <property type="entry name" value="Val-tRNA_synth_tRNA-bd"/>
</dbReference>
<dbReference type="InterPro" id="IPR009008">
    <property type="entry name" value="Val/Leu/Ile-tRNA-synth_edit"/>
</dbReference>
<dbReference type="InterPro" id="IPR002303">
    <property type="entry name" value="Valyl-tRNA_ligase"/>
</dbReference>
<dbReference type="PANTHER" id="PTHR11946:SF93">
    <property type="entry name" value="VALINE--TRNA LIGASE, CHLOROPLASTIC_MITOCHONDRIAL 2"/>
    <property type="match status" value="1"/>
</dbReference>
<dbReference type="PANTHER" id="PTHR11946">
    <property type="entry name" value="VALYL-TRNA SYNTHETASES"/>
    <property type="match status" value="1"/>
</dbReference>
<dbReference type="Pfam" id="PF08264">
    <property type="entry name" value="Anticodon_1"/>
    <property type="match status" value="1"/>
</dbReference>
<dbReference type="Pfam" id="PF00133">
    <property type="entry name" value="tRNA-synt_1"/>
    <property type="match status" value="3"/>
</dbReference>
<dbReference type="Pfam" id="PF10458">
    <property type="entry name" value="Val_tRNA-synt_C"/>
    <property type="match status" value="1"/>
</dbReference>
<dbReference type="PRINTS" id="PR00986">
    <property type="entry name" value="TRNASYNTHVAL"/>
</dbReference>
<dbReference type="SUPFAM" id="SSF47323">
    <property type="entry name" value="Anticodon-binding domain of a subclass of class I aminoacyl-tRNA synthetases"/>
    <property type="match status" value="1"/>
</dbReference>
<dbReference type="SUPFAM" id="SSF52374">
    <property type="entry name" value="Nucleotidylyl transferase"/>
    <property type="match status" value="1"/>
</dbReference>
<dbReference type="SUPFAM" id="SSF46589">
    <property type="entry name" value="tRNA-binding arm"/>
    <property type="match status" value="1"/>
</dbReference>
<dbReference type="SUPFAM" id="SSF50677">
    <property type="entry name" value="ValRS/IleRS/LeuRS editing domain"/>
    <property type="match status" value="1"/>
</dbReference>
<dbReference type="PROSITE" id="PS00178">
    <property type="entry name" value="AA_TRNA_LIGASE_I"/>
    <property type="match status" value="1"/>
</dbReference>
<feature type="chain" id="PRO_0000106211" description="Valine--tRNA ligase">
    <location>
        <begin position="1"/>
        <end position="1165"/>
    </location>
</feature>
<feature type="coiled-coil region" evidence="1">
    <location>
        <begin position="1001"/>
        <end position="1032"/>
    </location>
</feature>
<feature type="coiled-coil region" evidence="1">
    <location>
        <begin position="1097"/>
        <end position="1165"/>
    </location>
</feature>
<feature type="short sequence motif" description="'HIGH' region">
    <location>
        <begin position="43"/>
        <end position="53"/>
    </location>
</feature>
<feature type="short sequence motif" description="'KMSKS' region">
    <location>
        <begin position="800"/>
        <end position="804"/>
    </location>
</feature>
<feature type="binding site" evidence="1">
    <location>
        <position position="803"/>
    </location>
    <ligand>
        <name>ATP</name>
        <dbReference type="ChEBI" id="CHEBI:30616"/>
    </ligand>
</feature>
<organism>
    <name type="scientific">Aquifex aeolicus (strain VF5)</name>
    <dbReference type="NCBI Taxonomy" id="224324"/>
    <lineage>
        <taxon>Bacteria</taxon>
        <taxon>Pseudomonadati</taxon>
        <taxon>Aquificota</taxon>
        <taxon>Aquificia</taxon>
        <taxon>Aquificales</taxon>
        <taxon>Aquificaceae</taxon>
        <taxon>Aquifex</taxon>
    </lineage>
</organism>
<gene>
    <name evidence="1" type="primary">valS</name>
    <name type="ordered locus">aq_1413</name>
</gene>